<sequence>MKVLAALALSALALAKPTPPMPGMSLIQTGPQETRWVTDAEKLELTMNNVGFFDITDMPVTASSVTKPKSYAFPGNVSHQADVKPLLGKLSSDHLMSNLQKFSDFPNRYYQADTGVQSAEWVLSQVQGVIGKIQGAKAEKIEHKWKQPSIRAIIPGKSEKIVVVGAHQDSINGQNPKAAAPGADDNGSGSMTILEALTALVSDQKIAGGQATNTIEFHWYAGEEAGLLGSQAVFQQYKQAGKEVVAMLNQDMTGYGKTMGIITDNSDSALTTFTKMILDTYTTAKYADSECGYACSDHASANKAGYPSAFVYEAVLGQDNPAIHSPDDTIDKLDPAKMLEHAKLVVGFAYELAFANL</sequence>
<proteinExistence type="inferred from homology"/>
<gene>
    <name type="ORF">MCYG_04170</name>
</gene>
<dbReference type="EC" id="3.4.11.-"/>
<dbReference type="EMBL" id="DS995704">
    <property type="protein sequence ID" value="EEQ31351.1"/>
    <property type="molecule type" value="Genomic_DNA"/>
</dbReference>
<dbReference type="RefSeq" id="XP_002846433.1">
    <property type="nucleotide sequence ID" value="XM_002846387.1"/>
</dbReference>
<dbReference type="SMR" id="C5FNB5"/>
<dbReference type="STRING" id="554155.C5FNB5"/>
<dbReference type="GeneID" id="9224502"/>
<dbReference type="VEuPathDB" id="FungiDB:MCYG_04170"/>
<dbReference type="eggNOG" id="KOG2195">
    <property type="taxonomic scope" value="Eukaryota"/>
</dbReference>
<dbReference type="HOGENOM" id="CLU_025866_0_0_1"/>
<dbReference type="OMA" id="VESAQWV"/>
<dbReference type="OrthoDB" id="2214at2759"/>
<dbReference type="Proteomes" id="UP000002035">
    <property type="component" value="Unassembled WGS sequence"/>
</dbReference>
<dbReference type="GO" id="GO:0005576">
    <property type="term" value="C:extracellular region"/>
    <property type="evidence" value="ECO:0007669"/>
    <property type="project" value="UniProtKB-SubCell"/>
</dbReference>
<dbReference type="GO" id="GO:0004177">
    <property type="term" value="F:aminopeptidase activity"/>
    <property type="evidence" value="ECO:0007669"/>
    <property type="project" value="UniProtKB-KW"/>
</dbReference>
<dbReference type="GO" id="GO:0046872">
    <property type="term" value="F:metal ion binding"/>
    <property type="evidence" value="ECO:0007669"/>
    <property type="project" value="UniProtKB-KW"/>
</dbReference>
<dbReference type="GO" id="GO:0008235">
    <property type="term" value="F:metalloexopeptidase activity"/>
    <property type="evidence" value="ECO:0007669"/>
    <property type="project" value="InterPro"/>
</dbReference>
<dbReference type="GO" id="GO:0006508">
    <property type="term" value="P:proteolysis"/>
    <property type="evidence" value="ECO:0007669"/>
    <property type="project" value="UniProtKB-KW"/>
</dbReference>
<dbReference type="CDD" id="cd03879">
    <property type="entry name" value="M28_AAP"/>
    <property type="match status" value="1"/>
</dbReference>
<dbReference type="FunFam" id="3.40.630.10:FF:000042">
    <property type="entry name" value="Peptide hydrolase"/>
    <property type="match status" value="1"/>
</dbReference>
<dbReference type="Gene3D" id="3.40.630.10">
    <property type="entry name" value="Zn peptidases"/>
    <property type="match status" value="1"/>
</dbReference>
<dbReference type="InterPro" id="IPR045175">
    <property type="entry name" value="M28_fam"/>
</dbReference>
<dbReference type="InterPro" id="IPR007484">
    <property type="entry name" value="Peptidase_M28"/>
</dbReference>
<dbReference type="PANTHER" id="PTHR12147:SF56">
    <property type="entry name" value="AMINOPEPTIDASE YDR415C-RELATED"/>
    <property type="match status" value="1"/>
</dbReference>
<dbReference type="PANTHER" id="PTHR12147">
    <property type="entry name" value="METALLOPEPTIDASE M28 FAMILY MEMBER"/>
    <property type="match status" value="1"/>
</dbReference>
<dbReference type="Pfam" id="PF04389">
    <property type="entry name" value="Peptidase_M28"/>
    <property type="match status" value="1"/>
</dbReference>
<dbReference type="SUPFAM" id="SSF53187">
    <property type="entry name" value="Zn-dependent exopeptidases"/>
    <property type="match status" value="1"/>
</dbReference>
<accession>C5FNB5</accession>
<name>LAP5_ARTOC</name>
<protein>
    <recommendedName>
        <fullName>Probable leucine aminopeptidase MCYG_04170</fullName>
        <ecNumber>3.4.11.-</ecNumber>
    </recommendedName>
</protein>
<reference key="1">
    <citation type="journal article" date="2012" name="MBio">
        <title>Comparative genome analysis of Trichophyton rubrum and related dermatophytes reveals candidate genes involved in infection.</title>
        <authorList>
            <person name="Martinez D.A."/>
            <person name="Oliver B.G."/>
            <person name="Graeser Y."/>
            <person name="Goldberg J.M."/>
            <person name="Li W."/>
            <person name="Martinez-Rossi N.M."/>
            <person name="Monod M."/>
            <person name="Shelest E."/>
            <person name="Barton R.C."/>
            <person name="Birch E."/>
            <person name="Brakhage A.A."/>
            <person name="Chen Z."/>
            <person name="Gurr S.J."/>
            <person name="Heiman D."/>
            <person name="Heitman J."/>
            <person name="Kosti I."/>
            <person name="Rossi A."/>
            <person name="Saif S."/>
            <person name="Samalova M."/>
            <person name="Saunders C.W."/>
            <person name="Shea T."/>
            <person name="Summerbell R.C."/>
            <person name="Xu J."/>
            <person name="Young S."/>
            <person name="Zeng Q."/>
            <person name="Birren B.W."/>
            <person name="Cuomo C.A."/>
            <person name="White T.C."/>
        </authorList>
    </citation>
    <scope>NUCLEOTIDE SEQUENCE [LARGE SCALE GENOMIC DNA]</scope>
    <source>
        <strain>ATCC MYA-4605 / CBS 113480</strain>
    </source>
</reference>
<comment type="function">
    <text evidence="1">Probable extracellular aminopeptidase which contributes to pathogenicity.</text>
</comment>
<comment type="cofactor">
    <cofactor evidence="1">
        <name>Zn(2+)</name>
        <dbReference type="ChEBI" id="CHEBI:29105"/>
    </cofactor>
    <text evidence="1">Binds 2 Zn(2+) ions per subunit.</text>
</comment>
<comment type="subunit">
    <text evidence="1">Monomer.</text>
</comment>
<comment type="subcellular location">
    <subcellularLocation>
        <location evidence="1">Secreted</location>
    </subcellularLocation>
</comment>
<comment type="similarity">
    <text evidence="3">Belongs to the peptidase M28 family. M28E subfamily.</text>
</comment>
<keyword id="KW-0031">Aminopeptidase</keyword>
<keyword id="KW-1015">Disulfide bond</keyword>
<keyword id="KW-0325">Glycoprotein</keyword>
<keyword id="KW-0378">Hydrolase</keyword>
<keyword id="KW-0479">Metal-binding</keyword>
<keyword id="KW-0645">Protease</keyword>
<keyword id="KW-1185">Reference proteome</keyword>
<keyword id="KW-0964">Secreted</keyword>
<keyword id="KW-0732">Signal</keyword>
<keyword id="KW-0843">Virulence</keyword>
<keyword id="KW-0862">Zinc</keyword>
<evidence type="ECO:0000250" key="1"/>
<evidence type="ECO:0000255" key="2"/>
<evidence type="ECO:0000305" key="3"/>
<feature type="signal peptide" evidence="2">
    <location>
        <begin position="1"/>
        <end position="15"/>
    </location>
</feature>
<feature type="chain" id="PRO_0000390761" description="Probable leucine aminopeptidase MCYG_04170">
    <location>
        <begin position="16"/>
        <end position="357"/>
    </location>
</feature>
<feature type="binding site" evidence="1">
    <location>
        <position position="167"/>
    </location>
    <ligand>
        <name>Zn(2+)</name>
        <dbReference type="ChEBI" id="CHEBI:29105"/>
        <label>1</label>
    </ligand>
</feature>
<feature type="binding site" evidence="1">
    <location>
        <position position="185"/>
    </location>
    <ligand>
        <name>Zn(2+)</name>
        <dbReference type="ChEBI" id="CHEBI:29105"/>
        <label>1</label>
    </ligand>
</feature>
<feature type="binding site" evidence="1">
    <location>
        <position position="185"/>
    </location>
    <ligand>
        <name>Zn(2+)</name>
        <dbReference type="ChEBI" id="CHEBI:29105"/>
        <label>2</label>
        <note>catalytic</note>
    </ligand>
</feature>
<feature type="binding site" evidence="1">
    <location>
        <position position="224"/>
    </location>
    <ligand>
        <name>Zn(2+)</name>
        <dbReference type="ChEBI" id="CHEBI:29105"/>
        <label>2</label>
        <note>catalytic</note>
    </ligand>
</feature>
<feature type="binding site" evidence="1">
    <location>
        <position position="251"/>
    </location>
    <ligand>
        <name>Zn(2+)</name>
        <dbReference type="ChEBI" id="CHEBI:29105"/>
        <label>1</label>
    </ligand>
</feature>
<feature type="binding site" evidence="1">
    <location>
        <position position="324"/>
    </location>
    <ligand>
        <name>Zn(2+)</name>
        <dbReference type="ChEBI" id="CHEBI:29105"/>
        <label>2</label>
        <note>catalytic</note>
    </ligand>
</feature>
<feature type="glycosylation site" description="N-linked (GlcNAc...) asparagine" evidence="2">
    <location>
        <position position="76"/>
    </location>
</feature>
<feature type="glycosylation site" description="N-linked (GlcNAc...) asparagine" evidence="2">
    <location>
        <position position="186"/>
    </location>
</feature>
<feature type="disulfide bond" evidence="1">
    <location>
        <begin position="291"/>
        <end position="295"/>
    </location>
</feature>
<organism>
    <name type="scientific">Arthroderma otae (strain ATCC MYA-4605 / CBS 113480)</name>
    <name type="common">Microsporum canis</name>
    <dbReference type="NCBI Taxonomy" id="554155"/>
    <lineage>
        <taxon>Eukaryota</taxon>
        <taxon>Fungi</taxon>
        <taxon>Dikarya</taxon>
        <taxon>Ascomycota</taxon>
        <taxon>Pezizomycotina</taxon>
        <taxon>Eurotiomycetes</taxon>
        <taxon>Eurotiomycetidae</taxon>
        <taxon>Onygenales</taxon>
        <taxon>Arthrodermataceae</taxon>
        <taxon>Microsporum</taxon>
    </lineage>
</organism>